<accession>Q88DC5</accession>
<name>ORN_PSEPK</name>
<proteinExistence type="inferred from homology"/>
<keyword id="KW-0963">Cytoplasm</keyword>
<keyword id="KW-0269">Exonuclease</keyword>
<keyword id="KW-0378">Hydrolase</keyword>
<keyword id="KW-0540">Nuclease</keyword>
<keyword id="KW-1185">Reference proteome</keyword>
<sequence length="180" mass="20788">MQNPQNLIWIDLEMTGLDPDSDVIIEMATIVTDSELNTLAEGPVIAIHHSDEVLARMDEWNTRTHGASGLTQRVRESKVSMAEAEAQTIAFLEQWVPKGKSPICGNSICQDRRFLYRHMRNLENYFHYRNLDVSTLKELAARWAPDVRDSFKKGNTHLALDDIRESIAELRHYREHFIKL</sequence>
<evidence type="ECO:0000255" key="1">
    <source>
        <dbReference type="HAMAP-Rule" id="MF_00045"/>
    </source>
</evidence>
<protein>
    <recommendedName>
        <fullName evidence="1">Oligoribonuclease</fullName>
        <ecNumber evidence="1">3.1.15.-</ecNumber>
    </recommendedName>
</protein>
<dbReference type="EC" id="3.1.15.-" evidence="1"/>
<dbReference type="EMBL" id="AE015451">
    <property type="protein sequence ID" value="AAN70469.1"/>
    <property type="molecule type" value="Genomic_DNA"/>
</dbReference>
<dbReference type="RefSeq" id="NP_747005.1">
    <property type="nucleotide sequence ID" value="NC_002947.4"/>
</dbReference>
<dbReference type="RefSeq" id="WP_003249514.1">
    <property type="nucleotide sequence ID" value="NZ_CP169744.1"/>
</dbReference>
<dbReference type="SMR" id="Q88DC5"/>
<dbReference type="STRING" id="160488.PP_4902"/>
<dbReference type="PaxDb" id="160488-PP_4902"/>
<dbReference type="GeneID" id="83682634"/>
<dbReference type="KEGG" id="ppu:PP_4902"/>
<dbReference type="PATRIC" id="fig|160488.4.peg.5237"/>
<dbReference type="eggNOG" id="COG1949">
    <property type="taxonomic scope" value="Bacteria"/>
</dbReference>
<dbReference type="HOGENOM" id="CLU_064761_2_0_6"/>
<dbReference type="OrthoDB" id="9801329at2"/>
<dbReference type="PhylomeDB" id="Q88DC5"/>
<dbReference type="BioCyc" id="PPUT160488:G1G01-5244-MONOMER"/>
<dbReference type="Proteomes" id="UP000000556">
    <property type="component" value="Chromosome"/>
</dbReference>
<dbReference type="GO" id="GO:0005737">
    <property type="term" value="C:cytoplasm"/>
    <property type="evidence" value="ECO:0007669"/>
    <property type="project" value="UniProtKB-SubCell"/>
</dbReference>
<dbReference type="GO" id="GO:0000175">
    <property type="term" value="F:3'-5'-RNA exonuclease activity"/>
    <property type="evidence" value="ECO:0007669"/>
    <property type="project" value="InterPro"/>
</dbReference>
<dbReference type="GO" id="GO:0003676">
    <property type="term" value="F:nucleic acid binding"/>
    <property type="evidence" value="ECO:0007669"/>
    <property type="project" value="InterPro"/>
</dbReference>
<dbReference type="GO" id="GO:0006259">
    <property type="term" value="P:DNA metabolic process"/>
    <property type="evidence" value="ECO:0007669"/>
    <property type="project" value="UniProtKB-ARBA"/>
</dbReference>
<dbReference type="CDD" id="cd06135">
    <property type="entry name" value="Orn"/>
    <property type="match status" value="1"/>
</dbReference>
<dbReference type="FunFam" id="3.30.420.10:FF:000003">
    <property type="entry name" value="Oligoribonuclease"/>
    <property type="match status" value="1"/>
</dbReference>
<dbReference type="Gene3D" id="3.30.420.10">
    <property type="entry name" value="Ribonuclease H-like superfamily/Ribonuclease H"/>
    <property type="match status" value="1"/>
</dbReference>
<dbReference type="HAMAP" id="MF_00045">
    <property type="entry name" value="Oligoribonuclease"/>
    <property type="match status" value="1"/>
</dbReference>
<dbReference type="InterPro" id="IPR013520">
    <property type="entry name" value="Exonuclease_RNaseT/DNA_pol3"/>
</dbReference>
<dbReference type="InterPro" id="IPR022894">
    <property type="entry name" value="Oligoribonuclease"/>
</dbReference>
<dbReference type="InterPro" id="IPR012337">
    <property type="entry name" value="RNaseH-like_sf"/>
</dbReference>
<dbReference type="InterPro" id="IPR036397">
    <property type="entry name" value="RNaseH_sf"/>
</dbReference>
<dbReference type="NCBIfam" id="NF003765">
    <property type="entry name" value="PRK05359.1"/>
    <property type="match status" value="1"/>
</dbReference>
<dbReference type="PANTHER" id="PTHR11046">
    <property type="entry name" value="OLIGORIBONUCLEASE, MITOCHONDRIAL"/>
    <property type="match status" value="1"/>
</dbReference>
<dbReference type="PANTHER" id="PTHR11046:SF0">
    <property type="entry name" value="OLIGORIBONUCLEASE, MITOCHONDRIAL"/>
    <property type="match status" value="1"/>
</dbReference>
<dbReference type="Pfam" id="PF00929">
    <property type="entry name" value="RNase_T"/>
    <property type="match status" value="1"/>
</dbReference>
<dbReference type="SMART" id="SM00479">
    <property type="entry name" value="EXOIII"/>
    <property type="match status" value="1"/>
</dbReference>
<dbReference type="SUPFAM" id="SSF53098">
    <property type="entry name" value="Ribonuclease H-like"/>
    <property type="match status" value="1"/>
</dbReference>
<gene>
    <name evidence="1" type="primary">orn</name>
    <name type="ordered locus">PP_4902</name>
</gene>
<organism>
    <name type="scientific">Pseudomonas putida (strain ATCC 47054 / DSM 6125 / CFBP 8728 / NCIMB 11950 / KT2440)</name>
    <dbReference type="NCBI Taxonomy" id="160488"/>
    <lineage>
        <taxon>Bacteria</taxon>
        <taxon>Pseudomonadati</taxon>
        <taxon>Pseudomonadota</taxon>
        <taxon>Gammaproteobacteria</taxon>
        <taxon>Pseudomonadales</taxon>
        <taxon>Pseudomonadaceae</taxon>
        <taxon>Pseudomonas</taxon>
    </lineage>
</organism>
<reference key="1">
    <citation type="journal article" date="2002" name="Environ. Microbiol.">
        <title>Complete genome sequence and comparative analysis of the metabolically versatile Pseudomonas putida KT2440.</title>
        <authorList>
            <person name="Nelson K.E."/>
            <person name="Weinel C."/>
            <person name="Paulsen I.T."/>
            <person name="Dodson R.J."/>
            <person name="Hilbert H."/>
            <person name="Martins dos Santos V.A.P."/>
            <person name="Fouts D.E."/>
            <person name="Gill S.R."/>
            <person name="Pop M."/>
            <person name="Holmes M."/>
            <person name="Brinkac L.M."/>
            <person name="Beanan M.J."/>
            <person name="DeBoy R.T."/>
            <person name="Daugherty S.C."/>
            <person name="Kolonay J.F."/>
            <person name="Madupu R."/>
            <person name="Nelson W.C."/>
            <person name="White O."/>
            <person name="Peterson J.D."/>
            <person name="Khouri H.M."/>
            <person name="Hance I."/>
            <person name="Chris Lee P."/>
            <person name="Holtzapple E.K."/>
            <person name="Scanlan D."/>
            <person name="Tran K."/>
            <person name="Moazzez A."/>
            <person name="Utterback T.R."/>
            <person name="Rizzo M."/>
            <person name="Lee K."/>
            <person name="Kosack D."/>
            <person name="Moestl D."/>
            <person name="Wedler H."/>
            <person name="Lauber J."/>
            <person name="Stjepandic D."/>
            <person name="Hoheisel J."/>
            <person name="Straetz M."/>
            <person name="Heim S."/>
            <person name="Kiewitz C."/>
            <person name="Eisen J.A."/>
            <person name="Timmis K.N."/>
            <person name="Duesterhoeft A."/>
            <person name="Tuemmler B."/>
            <person name="Fraser C.M."/>
        </authorList>
    </citation>
    <scope>NUCLEOTIDE SEQUENCE [LARGE SCALE GENOMIC DNA]</scope>
    <source>
        <strain>ATCC 47054 / DSM 6125 / CFBP 8728 / NCIMB 11950 / KT2440</strain>
    </source>
</reference>
<comment type="function">
    <text evidence="1">3'-to-5' exoribonuclease specific for small oligoribonucleotides.</text>
</comment>
<comment type="subcellular location">
    <subcellularLocation>
        <location evidence="1">Cytoplasm</location>
    </subcellularLocation>
</comment>
<comment type="similarity">
    <text evidence="1">Belongs to the oligoribonuclease family.</text>
</comment>
<feature type="chain" id="PRO_0000111063" description="Oligoribonuclease">
    <location>
        <begin position="1"/>
        <end position="180"/>
    </location>
</feature>
<feature type="domain" description="Exonuclease" evidence="1">
    <location>
        <begin position="7"/>
        <end position="170"/>
    </location>
</feature>
<feature type="active site" evidence="1">
    <location>
        <position position="128"/>
    </location>
</feature>